<gene>
    <name type="ORF">D ORF A</name>
</gene>
<proteinExistence type="predicted"/>
<reference key="1">
    <citation type="journal article" date="1990" name="Virology">
        <title>The complete DNA sequence of vaccinia virus.</title>
        <authorList>
            <person name="Goebel S.J."/>
            <person name="Johnson G.P."/>
            <person name="Perkus M.E."/>
            <person name="Davis S.W."/>
            <person name="Winslow J.P."/>
            <person name="Paoletti E."/>
        </authorList>
    </citation>
    <scope>NUCLEOTIDE SEQUENCE [LARGE SCALE GENOMIC DNA]</scope>
</reference>
<reference key="2">
    <citation type="journal article" date="1990" name="Virology">
        <title>Appendix to 'The complete DNA sequence of vaccinia virus'.</title>
        <authorList>
            <person name="Goebel S.J."/>
            <person name="Johnson G.P."/>
            <person name="Perkus M.E."/>
            <person name="Davis S.W."/>
            <person name="Winslow J.P."/>
            <person name="Paoletti E."/>
        </authorList>
    </citation>
    <scope>COMPLETE GENOME</scope>
</reference>
<protein>
    <recommendedName>
        <fullName>Uncharacterized 9.2 kDa protein</fullName>
    </recommendedName>
</protein>
<organism>
    <name type="scientific">Vaccinia virus (strain Copenhagen)</name>
    <name type="common">VACV</name>
    <dbReference type="NCBI Taxonomy" id="10249"/>
    <lineage>
        <taxon>Viruses</taxon>
        <taxon>Varidnaviria</taxon>
        <taxon>Bamfordvirae</taxon>
        <taxon>Nucleocytoviricota</taxon>
        <taxon>Pokkesviricetes</taxon>
        <taxon>Chitovirales</taxon>
        <taxon>Poxviridae</taxon>
        <taxon>Chordopoxvirinae</taxon>
        <taxon>Orthopoxvirus</taxon>
        <taxon>Vaccinia virus</taxon>
    </lineage>
</organism>
<name>YVDA_VACCC</name>
<organismHost>
    <name type="scientific">Homo sapiens</name>
    <name type="common">Human</name>
    <dbReference type="NCBI Taxonomy" id="9606"/>
</organismHost>
<keyword id="KW-1185">Reference proteome</keyword>
<accession>P20550</accession>
<dbReference type="EMBL" id="M35027">
    <property type="protein sequence ID" value="AAA48096.1"/>
    <property type="molecule type" value="Genomic_DNA"/>
</dbReference>
<dbReference type="PIR" id="D42516">
    <property type="entry name" value="D42516"/>
</dbReference>
<dbReference type="SMR" id="P20550"/>
<dbReference type="Proteomes" id="UP000008269">
    <property type="component" value="Segment"/>
</dbReference>
<sequence>MAPLFSSKKFFVDGLSSIVDAPLINFLLRSIIVAKSTLSTRTNPYSLNTLTISFFLIMYSVIGVDIVDGLYTTILSSAIFSTDI</sequence>
<feature type="chain" id="PRO_0000099684" description="Uncharacterized 9.2 kDa protein">
    <location>
        <begin position="1"/>
        <end position="84"/>
    </location>
</feature>